<evidence type="ECO:0000250" key="1"/>
<evidence type="ECO:0000255" key="2">
    <source>
        <dbReference type="PROSITE-ProRule" id="PRU10019"/>
    </source>
</evidence>
<evidence type="ECO:0000305" key="3"/>
<keyword id="KW-0963">Cytoplasm</keyword>
<keyword id="KW-0903">Direct protein sequencing</keyword>
<keyword id="KW-0570">Pentose shunt</keyword>
<keyword id="KW-0597">Phosphoprotein</keyword>
<keyword id="KW-0704">Schiff base</keyword>
<keyword id="KW-0808">Transferase</keyword>
<proteinExistence type="evidence at protein level"/>
<name>TALDO_CARMA</name>
<comment type="function">
    <text>Transaldolase is important for the balance of metabolites in the pentose-phosphate pathway. May play a role in the conversion of sterols into ecdysteroids via NADPH.</text>
</comment>
<comment type="catalytic activity">
    <reaction evidence="2">
        <text>D-sedoheptulose 7-phosphate + D-glyceraldehyde 3-phosphate = D-erythrose 4-phosphate + beta-D-fructose 6-phosphate</text>
        <dbReference type="Rhea" id="RHEA:17053"/>
        <dbReference type="ChEBI" id="CHEBI:16897"/>
        <dbReference type="ChEBI" id="CHEBI:57483"/>
        <dbReference type="ChEBI" id="CHEBI:57634"/>
        <dbReference type="ChEBI" id="CHEBI:59776"/>
        <dbReference type="EC" id="2.2.1.2"/>
    </reaction>
</comment>
<comment type="pathway">
    <text>Carbohydrate degradation; pentose phosphate pathway; D-glyceraldehyde 3-phosphate and beta-D-fructose 6-phosphate from D-ribose 5-phosphate and D-xylulose 5-phosphate (non-oxidative stage): step 2/3.</text>
</comment>
<comment type="subunit">
    <text evidence="1">Homodimer.</text>
</comment>
<comment type="subcellular location">
    <subcellularLocation>
        <location>Cytoplasm</location>
    </subcellularLocation>
</comment>
<comment type="tissue specificity">
    <text>Predominantly expressed in Y-organs.</text>
</comment>
<comment type="PTM">
    <text>Phosphorylated.</text>
</comment>
<comment type="miscellaneous">
    <text>On the 2D-gel the determined pI of this protein is: 6.8, its MW is: 36.2 kDa.</text>
</comment>
<comment type="similarity">
    <text evidence="3">Belongs to the transaldolase family. Type 1 subfamily.</text>
</comment>
<protein>
    <recommendedName>
        <fullName>Transaldolase</fullName>
        <ecNumber>2.2.1.2</ecNumber>
    </recommendedName>
</protein>
<feature type="chain" id="PRO_0000173568" description="Transaldolase">
    <location>
        <begin position="1" status="less than"/>
        <end position="75" status="greater than"/>
    </location>
</feature>
<feature type="non-consecutive residues" evidence="3">
    <location>
        <begin position="17"/>
        <end position="18"/>
    </location>
</feature>
<feature type="non-consecutive residues" evidence="3">
    <location>
        <begin position="27"/>
        <end position="28"/>
    </location>
</feature>
<feature type="non-consecutive residues" evidence="3">
    <location>
        <begin position="34"/>
        <end position="35"/>
    </location>
</feature>
<feature type="non-consecutive residues" evidence="3">
    <location>
        <begin position="48"/>
        <end position="49"/>
    </location>
</feature>
<feature type="non-consecutive residues" evidence="3">
    <location>
        <begin position="64"/>
        <end position="65"/>
    </location>
</feature>
<feature type="non-terminal residue">
    <location>
        <position position="1"/>
    </location>
</feature>
<feature type="non-terminal residue">
    <location>
        <position position="75"/>
    </location>
</feature>
<reference key="1">
    <citation type="journal article" date="1996" name="Endocrine">
        <title>A transaldolase. An enzyme implicated in crab steroidogenesis.</title>
        <authorList>
            <person name="Lachaise F."/>
            <person name="Somme G."/>
            <person name="Carpentier G."/>
            <person name="Granjeon E."/>
            <person name="Webster S."/>
            <person name="Baghdassarian D."/>
        </authorList>
    </citation>
    <scope>PROTEIN SEQUENCE</scope>
</reference>
<dbReference type="EC" id="2.2.1.2"/>
<dbReference type="SMR" id="P80427"/>
<dbReference type="UniPathway" id="UPA00115">
    <property type="reaction ID" value="UER00414"/>
</dbReference>
<dbReference type="GO" id="GO:0005737">
    <property type="term" value="C:cytoplasm"/>
    <property type="evidence" value="ECO:0007669"/>
    <property type="project" value="UniProtKB-SubCell"/>
</dbReference>
<dbReference type="GO" id="GO:0004801">
    <property type="term" value="F:transaldolase activity"/>
    <property type="evidence" value="ECO:0007669"/>
    <property type="project" value="UniProtKB-EC"/>
</dbReference>
<dbReference type="GO" id="GO:0005975">
    <property type="term" value="P:carbohydrate metabolic process"/>
    <property type="evidence" value="ECO:0007669"/>
    <property type="project" value="InterPro"/>
</dbReference>
<dbReference type="GO" id="GO:0006098">
    <property type="term" value="P:pentose-phosphate shunt"/>
    <property type="evidence" value="ECO:0007669"/>
    <property type="project" value="UniProtKB-UniPathway"/>
</dbReference>
<dbReference type="InterPro" id="IPR018225">
    <property type="entry name" value="Transaldolase_AS"/>
</dbReference>
<dbReference type="PROSITE" id="PS01054">
    <property type="entry name" value="TRANSALDOLASE_1"/>
    <property type="match status" value="1"/>
</dbReference>
<sequence length="75" mass="8818">KYKPTDATTNPSLILQAKFLEELQNSKKIYNYYKKESVVEHLSESSAKKLEMTEANFRWEMNEDKFAVDAVKLEK</sequence>
<organism>
    <name type="scientific">Carcinus maenas</name>
    <name type="common">Common shore crab</name>
    <name type="synonym">Green crab</name>
    <dbReference type="NCBI Taxonomy" id="6759"/>
    <lineage>
        <taxon>Eukaryota</taxon>
        <taxon>Metazoa</taxon>
        <taxon>Ecdysozoa</taxon>
        <taxon>Arthropoda</taxon>
        <taxon>Crustacea</taxon>
        <taxon>Multicrustacea</taxon>
        <taxon>Malacostraca</taxon>
        <taxon>Eumalacostraca</taxon>
        <taxon>Eucarida</taxon>
        <taxon>Decapoda</taxon>
        <taxon>Pleocyemata</taxon>
        <taxon>Brachyura</taxon>
        <taxon>Eubrachyura</taxon>
        <taxon>Portunoidea</taxon>
        <taxon>Carcinidae</taxon>
        <taxon>Carcinus</taxon>
    </lineage>
</organism>
<accession>P80427</accession>